<protein>
    <recommendedName>
        <fullName evidence="1">Glucosamine-6-phosphate deaminase</fullName>
        <ecNumber evidence="1">3.5.99.6</ecNumber>
    </recommendedName>
    <alternativeName>
        <fullName evidence="1">GlcN6P deaminase</fullName>
        <shortName evidence="1">GNPDA</shortName>
    </alternativeName>
    <alternativeName>
        <fullName evidence="1">Glucosamine-6-phosphate isomerase</fullName>
    </alternativeName>
</protein>
<proteinExistence type="inferred from homology"/>
<sequence>MRLIPLSTAEQVGKWAARHIVNRINAFKPTADRPFVLGLPTGGTPLTAYKALVEMHKAGEVSFKHVVTFNMDEYVGLPKEHPESYHSFMHRNFFDHVDIPAENINLLNGNAPDIDAECRQYEEKIRSYGKIHLFMGGVGNDGHIAFNEPASSLASRTRIKTLTHDTRVANSRFFDGDVNQVPKYALTVGVGTLLDAEEVMILVLGHQKAQALQAAVEGNVNHMWTISCLQLHPKAVVVCDEPSTMELKVKTLKYFNELEAENIKGL</sequence>
<comment type="function">
    <text evidence="1">Catalyzes the reversible isomerization-deamination of glucosamine 6-phosphate (GlcN6P) to form fructose 6-phosphate (Fru6P) and ammonium ion.</text>
</comment>
<comment type="catalytic activity">
    <reaction evidence="1">
        <text>alpha-D-glucosamine 6-phosphate + H2O = beta-D-fructose 6-phosphate + NH4(+)</text>
        <dbReference type="Rhea" id="RHEA:12172"/>
        <dbReference type="ChEBI" id="CHEBI:15377"/>
        <dbReference type="ChEBI" id="CHEBI:28938"/>
        <dbReference type="ChEBI" id="CHEBI:57634"/>
        <dbReference type="ChEBI" id="CHEBI:75989"/>
        <dbReference type="EC" id="3.5.99.6"/>
    </reaction>
</comment>
<comment type="activity regulation">
    <text evidence="1">Allosterically activated by N-acetylglucosamine 6-phosphate (GlcNAc6P).</text>
</comment>
<comment type="pathway">
    <text evidence="1">Amino-sugar metabolism; N-acetylneuraminate degradation; D-fructose 6-phosphate from N-acetylneuraminate: step 5/5.</text>
</comment>
<comment type="subunit">
    <text evidence="1">Homohexamer.</text>
</comment>
<comment type="similarity">
    <text evidence="1">Belongs to the glucosamine/galactosamine-6-phosphate isomerase family. NagB subfamily.</text>
</comment>
<name>NAGB_SALNS</name>
<evidence type="ECO:0000255" key="1">
    <source>
        <dbReference type="HAMAP-Rule" id="MF_01241"/>
    </source>
</evidence>
<dbReference type="EC" id="3.5.99.6" evidence="1"/>
<dbReference type="EMBL" id="CP001113">
    <property type="protein sequence ID" value="ACF65226.1"/>
    <property type="molecule type" value="Genomic_DNA"/>
</dbReference>
<dbReference type="RefSeq" id="WP_001237059.1">
    <property type="nucleotide sequence ID" value="NZ_CCMR01000003.1"/>
</dbReference>
<dbReference type="SMR" id="B4SYN7"/>
<dbReference type="KEGG" id="see:SNSL254_A0743"/>
<dbReference type="HOGENOM" id="CLU_049611_0_1_6"/>
<dbReference type="UniPathway" id="UPA00629">
    <property type="reaction ID" value="UER00684"/>
</dbReference>
<dbReference type="Proteomes" id="UP000008824">
    <property type="component" value="Chromosome"/>
</dbReference>
<dbReference type="GO" id="GO:0005737">
    <property type="term" value="C:cytoplasm"/>
    <property type="evidence" value="ECO:0007669"/>
    <property type="project" value="TreeGrafter"/>
</dbReference>
<dbReference type="GO" id="GO:0004342">
    <property type="term" value="F:glucosamine-6-phosphate deaminase activity"/>
    <property type="evidence" value="ECO:0007669"/>
    <property type="project" value="UniProtKB-UniRule"/>
</dbReference>
<dbReference type="GO" id="GO:0042802">
    <property type="term" value="F:identical protein binding"/>
    <property type="evidence" value="ECO:0007669"/>
    <property type="project" value="TreeGrafter"/>
</dbReference>
<dbReference type="GO" id="GO:0005975">
    <property type="term" value="P:carbohydrate metabolic process"/>
    <property type="evidence" value="ECO:0007669"/>
    <property type="project" value="InterPro"/>
</dbReference>
<dbReference type="GO" id="GO:0006043">
    <property type="term" value="P:glucosamine catabolic process"/>
    <property type="evidence" value="ECO:0007669"/>
    <property type="project" value="TreeGrafter"/>
</dbReference>
<dbReference type="GO" id="GO:0006046">
    <property type="term" value="P:N-acetylglucosamine catabolic process"/>
    <property type="evidence" value="ECO:0007669"/>
    <property type="project" value="TreeGrafter"/>
</dbReference>
<dbReference type="GO" id="GO:0019262">
    <property type="term" value="P:N-acetylneuraminate catabolic process"/>
    <property type="evidence" value="ECO:0007669"/>
    <property type="project" value="UniProtKB-UniRule"/>
</dbReference>
<dbReference type="CDD" id="cd01399">
    <property type="entry name" value="GlcN6P_deaminase"/>
    <property type="match status" value="1"/>
</dbReference>
<dbReference type="FunFam" id="3.40.50.1360:FF:000002">
    <property type="entry name" value="Glucosamine-6-phosphate deaminase"/>
    <property type="match status" value="1"/>
</dbReference>
<dbReference type="Gene3D" id="3.40.50.1360">
    <property type="match status" value="1"/>
</dbReference>
<dbReference type="HAMAP" id="MF_01241">
    <property type="entry name" value="GlcN6P_deamin"/>
    <property type="match status" value="1"/>
</dbReference>
<dbReference type="InterPro" id="IPR006148">
    <property type="entry name" value="Glc/Gal-6P_isomerase"/>
</dbReference>
<dbReference type="InterPro" id="IPR004547">
    <property type="entry name" value="Glucosamine6P_isomerase"/>
</dbReference>
<dbReference type="InterPro" id="IPR018321">
    <property type="entry name" value="Glucosamine6P_isomerase_CS"/>
</dbReference>
<dbReference type="InterPro" id="IPR037171">
    <property type="entry name" value="NagB/RpiA_transferase-like"/>
</dbReference>
<dbReference type="NCBIfam" id="TIGR00502">
    <property type="entry name" value="nagB"/>
    <property type="match status" value="1"/>
</dbReference>
<dbReference type="NCBIfam" id="NF001685">
    <property type="entry name" value="PRK00443.1-5"/>
    <property type="match status" value="1"/>
</dbReference>
<dbReference type="PANTHER" id="PTHR11280">
    <property type="entry name" value="GLUCOSAMINE-6-PHOSPHATE ISOMERASE"/>
    <property type="match status" value="1"/>
</dbReference>
<dbReference type="PANTHER" id="PTHR11280:SF5">
    <property type="entry name" value="GLUCOSAMINE-6-PHOSPHATE ISOMERASE"/>
    <property type="match status" value="1"/>
</dbReference>
<dbReference type="Pfam" id="PF01182">
    <property type="entry name" value="Glucosamine_iso"/>
    <property type="match status" value="1"/>
</dbReference>
<dbReference type="SUPFAM" id="SSF100950">
    <property type="entry name" value="NagB/RpiA/CoA transferase-like"/>
    <property type="match status" value="1"/>
</dbReference>
<dbReference type="PROSITE" id="PS01161">
    <property type="entry name" value="GLC_GALNAC_ISOMERASE"/>
    <property type="match status" value="1"/>
</dbReference>
<accession>B4SYN7</accession>
<feature type="chain" id="PRO_1000139789" description="Glucosamine-6-phosphate deaminase">
    <location>
        <begin position="1"/>
        <end position="266"/>
    </location>
</feature>
<feature type="active site" description="Proton acceptor; for enolization step" evidence="1">
    <location>
        <position position="72"/>
    </location>
</feature>
<feature type="active site" description="For ring-opening step" evidence="1">
    <location>
        <position position="141"/>
    </location>
</feature>
<feature type="active site" description="Proton acceptor; for ring-opening step" evidence="1">
    <location>
        <position position="143"/>
    </location>
</feature>
<feature type="active site" description="For ring-opening step" evidence="1">
    <location>
        <position position="148"/>
    </location>
</feature>
<feature type="site" description="Part of the allosteric site" evidence="1">
    <location>
        <position position="151"/>
    </location>
</feature>
<feature type="site" description="Part of the allosteric site" evidence="1">
    <location>
        <position position="158"/>
    </location>
</feature>
<feature type="site" description="Part of the allosteric site" evidence="1">
    <location>
        <position position="160"/>
    </location>
</feature>
<feature type="site" description="Part of the allosteric site" evidence="1">
    <location>
        <position position="161"/>
    </location>
</feature>
<feature type="site" description="Part of the allosteric site" evidence="1">
    <location>
        <position position="254"/>
    </location>
</feature>
<gene>
    <name evidence="1" type="primary">nagB</name>
    <name type="ordered locus">SNSL254_A0743</name>
</gene>
<reference key="1">
    <citation type="journal article" date="2011" name="J. Bacteriol.">
        <title>Comparative genomics of 28 Salmonella enterica isolates: evidence for CRISPR-mediated adaptive sublineage evolution.</title>
        <authorList>
            <person name="Fricke W.F."/>
            <person name="Mammel M.K."/>
            <person name="McDermott P.F."/>
            <person name="Tartera C."/>
            <person name="White D.G."/>
            <person name="Leclerc J.E."/>
            <person name="Ravel J."/>
            <person name="Cebula T.A."/>
        </authorList>
    </citation>
    <scope>NUCLEOTIDE SEQUENCE [LARGE SCALE GENOMIC DNA]</scope>
    <source>
        <strain>SL254</strain>
    </source>
</reference>
<keyword id="KW-0021">Allosteric enzyme</keyword>
<keyword id="KW-0119">Carbohydrate metabolism</keyword>
<keyword id="KW-0378">Hydrolase</keyword>
<organism>
    <name type="scientific">Salmonella newport (strain SL254)</name>
    <dbReference type="NCBI Taxonomy" id="423368"/>
    <lineage>
        <taxon>Bacteria</taxon>
        <taxon>Pseudomonadati</taxon>
        <taxon>Pseudomonadota</taxon>
        <taxon>Gammaproteobacteria</taxon>
        <taxon>Enterobacterales</taxon>
        <taxon>Enterobacteriaceae</taxon>
        <taxon>Salmonella</taxon>
    </lineage>
</organism>